<name>ACKA_STRPN</name>
<gene>
    <name evidence="1" type="primary">ackA</name>
    <name type="ordered locus">SP_2044</name>
</gene>
<sequence>MTKTIAINAGSSSLKWQLYLMPEEKVLAKGLIERIGLKDSISTVKFDGRSEQQILDIENHIQAVKILLDDLIRFDIIKAYDEITGVGHRVVAGGEYFKESTVVEGDVLEKVEELSLLAPLHNPANAAGVRAFKELLPDITSVVVFDTSFHTSMPEKAYRYPLPTKYYTENKVRKYGAHGTSHQFVAGEAAKLLGRPLEDLKLITCHIGNGGSITAVKAGKSVDTSMGFTPLGGIMMGTRTGDIDPAIIPYLMQYTEDFNTPEDISRVLNRESGLLGVSANSSDMRDIEAAVAEGNHEASLAYEMYVDRIQKHIGQYLAVLNGADAIVFTAGVGENAESFRRDVISGISWFGCDVDDEKNVFGVTGDISTEAAKIRVLVIPTDEELVIARDVERLKK</sequence>
<reference key="1">
    <citation type="journal article" date="2001" name="Science">
        <title>Complete genome sequence of a virulent isolate of Streptococcus pneumoniae.</title>
        <authorList>
            <person name="Tettelin H."/>
            <person name="Nelson K.E."/>
            <person name="Paulsen I.T."/>
            <person name="Eisen J.A."/>
            <person name="Read T.D."/>
            <person name="Peterson S.N."/>
            <person name="Heidelberg J.F."/>
            <person name="DeBoy R.T."/>
            <person name="Haft D.H."/>
            <person name="Dodson R.J."/>
            <person name="Durkin A.S."/>
            <person name="Gwinn M.L."/>
            <person name="Kolonay J.F."/>
            <person name="Nelson W.C."/>
            <person name="Peterson J.D."/>
            <person name="Umayam L.A."/>
            <person name="White O."/>
            <person name="Salzberg S.L."/>
            <person name="Lewis M.R."/>
            <person name="Radune D."/>
            <person name="Holtzapple E.K."/>
            <person name="Khouri H.M."/>
            <person name="Wolf A.M."/>
            <person name="Utterback T.R."/>
            <person name="Hansen C.L."/>
            <person name="McDonald L.A."/>
            <person name="Feldblyum T.V."/>
            <person name="Angiuoli S.V."/>
            <person name="Dickinson T."/>
            <person name="Hickey E.K."/>
            <person name="Holt I.E."/>
            <person name="Loftus B.J."/>
            <person name="Yang F."/>
            <person name="Smith H.O."/>
            <person name="Venter J.C."/>
            <person name="Dougherty B.A."/>
            <person name="Morrison D.A."/>
            <person name="Hollingshead S.K."/>
            <person name="Fraser C.M."/>
        </authorList>
    </citation>
    <scope>NUCLEOTIDE SEQUENCE [LARGE SCALE GENOMIC DNA]</scope>
    <source>
        <strain>ATCC BAA-334 / TIGR4</strain>
    </source>
</reference>
<organism>
    <name type="scientific">Streptococcus pneumoniae serotype 4 (strain ATCC BAA-334 / TIGR4)</name>
    <dbReference type="NCBI Taxonomy" id="170187"/>
    <lineage>
        <taxon>Bacteria</taxon>
        <taxon>Bacillati</taxon>
        <taxon>Bacillota</taxon>
        <taxon>Bacilli</taxon>
        <taxon>Lactobacillales</taxon>
        <taxon>Streptococcaceae</taxon>
        <taxon>Streptococcus</taxon>
    </lineage>
</organism>
<comment type="function">
    <text evidence="1">Catalyzes the formation of acetyl phosphate from acetate and ATP. Can also catalyze the reverse reaction.</text>
</comment>
<comment type="catalytic activity">
    <reaction evidence="1">
        <text>acetate + ATP = acetyl phosphate + ADP</text>
        <dbReference type="Rhea" id="RHEA:11352"/>
        <dbReference type="ChEBI" id="CHEBI:22191"/>
        <dbReference type="ChEBI" id="CHEBI:30089"/>
        <dbReference type="ChEBI" id="CHEBI:30616"/>
        <dbReference type="ChEBI" id="CHEBI:456216"/>
        <dbReference type="EC" id="2.7.2.1"/>
    </reaction>
</comment>
<comment type="cofactor">
    <cofactor evidence="1">
        <name>Mg(2+)</name>
        <dbReference type="ChEBI" id="CHEBI:18420"/>
    </cofactor>
    <cofactor evidence="1">
        <name>Mn(2+)</name>
        <dbReference type="ChEBI" id="CHEBI:29035"/>
    </cofactor>
    <text evidence="1">Mg(2+). Can also accept Mn(2+).</text>
</comment>
<comment type="pathway">
    <text evidence="1">Metabolic intermediate biosynthesis; acetyl-CoA biosynthesis; acetyl-CoA from acetate: step 1/2.</text>
</comment>
<comment type="subunit">
    <text evidence="1">Homodimer.</text>
</comment>
<comment type="subcellular location">
    <subcellularLocation>
        <location evidence="1">Cytoplasm</location>
    </subcellularLocation>
</comment>
<comment type="similarity">
    <text evidence="1">Belongs to the acetokinase family.</text>
</comment>
<dbReference type="EC" id="2.7.2.1" evidence="1"/>
<dbReference type="EMBL" id="AE005672">
    <property type="protein sequence ID" value="AAK76109.1"/>
    <property type="molecule type" value="Genomic_DNA"/>
</dbReference>
<dbReference type="PIR" id="D95239">
    <property type="entry name" value="D95239"/>
</dbReference>
<dbReference type="RefSeq" id="WP_000167757.1">
    <property type="nucleotide sequence ID" value="NZ_CP155539.1"/>
</dbReference>
<dbReference type="SMR" id="P63413"/>
<dbReference type="PaxDb" id="170187-SP_2044"/>
<dbReference type="EnsemblBacteria" id="AAK76109">
    <property type="protein sequence ID" value="AAK76109"/>
    <property type="gene ID" value="SP_2044"/>
</dbReference>
<dbReference type="KEGG" id="spn:SP_2044"/>
<dbReference type="eggNOG" id="COG0282">
    <property type="taxonomic scope" value="Bacteria"/>
</dbReference>
<dbReference type="PhylomeDB" id="P63413"/>
<dbReference type="BioCyc" id="SPNE170187:G1FZB-2113-MONOMER"/>
<dbReference type="UniPathway" id="UPA00340">
    <property type="reaction ID" value="UER00458"/>
</dbReference>
<dbReference type="Proteomes" id="UP000000585">
    <property type="component" value="Chromosome"/>
</dbReference>
<dbReference type="GO" id="GO:0005737">
    <property type="term" value="C:cytoplasm"/>
    <property type="evidence" value="ECO:0007669"/>
    <property type="project" value="UniProtKB-SubCell"/>
</dbReference>
<dbReference type="GO" id="GO:0008776">
    <property type="term" value="F:acetate kinase activity"/>
    <property type="evidence" value="ECO:0007669"/>
    <property type="project" value="UniProtKB-UniRule"/>
</dbReference>
<dbReference type="GO" id="GO:0005524">
    <property type="term" value="F:ATP binding"/>
    <property type="evidence" value="ECO:0007669"/>
    <property type="project" value="UniProtKB-KW"/>
</dbReference>
<dbReference type="GO" id="GO:0000287">
    <property type="term" value="F:magnesium ion binding"/>
    <property type="evidence" value="ECO:0007669"/>
    <property type="project" value="UniProtKB-UniRule"/>
</dbReference>
<dbReference type="GO" id="GO:0006083">
    <property type="term" value="P:acetate metabolic process"/>
    <property type="evidence" value="ECO:0007669"/>
    <property type="project" value="TreeGrafter"/>
</dbReference>
<dbReference type="GO" id="GO:0006085">
    <property type="term" value="P:acetyl-CoA biosynthetic process"/>
    <property type="evidence" value="ECO:0007669"/>
    <property type="project" value="UniProtKB-UniRule"/>
</dbReference>
<dbReference type="CDD" id="cd24010">
    <property type="entry name" value="ASKHA_NBD_AcK_PK"/>
    <property type="match status" value="1"/>
</dbReference>
<dbReference type="Gene3D" id="3.30.420.40">
    <property type="match status" value="2"/>
</dbReference>
<dbReference type="HAMAP" id="MF_00020">
    <property type="entry name" value="Acetate_kinase"/>
    <property type="match status" value="1"/>
</dbReference>
<dbReference type="InterPro" id="IPR004372">
    <property type="entry name" value="Ac/propionate_kinase"/>
</dbReference>
<dbReference type="InterPro" id="IPR000890">
    <property type="entry name" value="Aliphatic_acid_kin_short-chain"/>
</dbReference>
<dbReference type="InterPro" id="IPR023865">
    <property type="entry name" value="Aliphatic_acid_kinase_CS"/>
</dbReference>
<dbReference type="InterPro" id="IPR043129">
    <property type="entry name" value="ATPase_NBD"/>
</dbReference>
<dbReference type="NCBIfam" id="TIGR00016">
    <property type="entry name" value="ackA"/>
    <property type="match status" value="1"/>
</dbReference>
<dbReference type="PANTHER" id="PTHR21060">
    <property type="entry name" value="ACETATE KINASE"/>
    <property type="match status" value="1"/>
</dbReference>
<dbReference type="PANTHER" id="PTHR21060:SF15">
    <property type="entry name" value="ACETATE KINASE-RELATED"/>
    <property type="match status" value="1"/>
</dbReference>
<dbReference type="Pfam" id="PF00871">
    <property type="entry name" value="Acetate_kinase"/>
    <property type="match status" value="1"/>
</dbReference>
<dbReference type="PIRSF" id="PIRSF000722">
    <property type="entry name" value="Acetate_prop_kin"/>
    <property type="match status" value="1"/>
</dbReference>
<dbReference type="PRINTS" id="PR00471">
    <property type="entry name" value="ACETATEKNASE"/>
</dbReference>
<dbReference type="SUPFAM" id="SSF53067">
    <property type="entry name" value="Actin-like ATPase domain"/>
    <property type="match status" value="2"/>
</dbReference>
<dbReference type="PROSITE" id="PS01075">
    <property type="entry name" value="ACETATE_KINASE_1"/>
    <property type="match status" value="1"/>
</dbReference>
<dbReference type="PROSITE" id="PS01076">
    <property type="entry name" value="ACETATE_KINASE_2"/>
    <property type="match status" value="1"/>
</dbReference>
<protein>
    <recommendedName>
        <fullName evidence="1">Acetate kinase</fullName>
        <ecNumber evidence="1">2.7.2.1</ecNumber>
    </recommendedName>
    <alternativeName>
        <fullName evidence="1">Acetokinase</fullName>
    </alternativeName>
</protein>
<accession>P63413</accession>
<accession>Q97NI3</accession>
<feature type="chain" id="PRO_0000107623" description="Acetate kinase">
    <location>
        <begin position="1"/>
        <end position="396"/>
    </location>
</feature>
<feature type="active site" description="Proton donor/acceptor" evidence="1">
    <location>
        <position position="146"/>
    </location>
</feature>
<feature type="binding site" evidence="1">
    <location>
        <position position="8"/>
    </location>
    <ligand>
        <name>Mg(2+)</name>
        <dbReference type="ChEBI" id="CHEBI:18420"/>
    </ligand>
</feature>
<feature type="binding site" evidence="1">
    <location>
        <position position="15"/>
    </location>
    <ligand>
        <name>ATP</name>
        <dbReference type="ChEBI" id="CHEBI:30616"/>
    </ligand>
</feature>
<feature type="binding site" evidence="1">
    <location>
        <position position="89"/>
    </location>
    <ligand>
        <name>substrate</name>
    </ligand>
</feature>
<feature type="binding site" evidence="1">
    <location>
        <begin position="206"/>
        <end position="210"/>
    </location>
    <ligand>
        <name>ATP</name>
        <dbReference type="ChEBI" id="CHEBI:30616"/>
    </ligand>
</feature>
<feature type="binding site" evidence="1">
    <location>
        <begin position="283"/>
        <end position="285"/>
    </location>
    <ligand>
        <name>ATP</name>
        <dbReference type="ChEBI" id="CHEBI:30616"/>
    </ligand>
</feature>
<feature type="binding site" evidence="1">
    <location>
        <begin position="331"/>
        <end position="335"/>
    </location>
    <ligand>
        <name>ATP</name>
        <dbReference type="ChEBI" id="CHEBI:30616"/>
    </ligand>
</feature>
<feature type="binding site" evidence="1">
    <location>
        <position position="383"/>
    </location>
    <ligand>
        <name>Mg(2+)</name>
        <dbReference type="ChEBI" id="CHEBI:18420"/>
    </ligand>
</feature>
<feature type="site" description="Transition state stabilizer" evidence="1">
    <location>
        <position position="178"/>
    </location>
</feature>
<feature type="site" description="Transition state stabilizer" evidence="1">
    <location>
        <position position="239"/>
    </location>
</feature>
<keyword id="KW-0067">ATP-binding</keyword>
<keyword id="KW-0963">Cytoplasm</keyword>
<keyword id="KW-0418">Kinase</keyword>
<keyword id="KW-0460">Magnesium</keyword>
<keyword id="KW-0479">Metal-binding</keyword>
<keyword id="KW-0547">Nucleotide-binding</keyword>
<keyword id="KW-1185">Reference proteome</keyword>
<keyword id="KW-0808">Transferase</keyword>
<proteinExistence type="inferred from homology"/>
<evidence type="ECO:0000255" key="1">
    <source>
        <dbReference type="HAMAP-Rule" id="MF_00020"/>
    </source>
</evidence>